<name>PNP_NITV9</name>
<reference key="1">
    <citation type="submission" date="2008-10" db="EMBL/GenBank/DDBJ databases">
        <title>Complete sequence of Desulfovibrio vulgaris str. 'Miyazaki F'.</title>
        <authorList>
            <person name="Lucas S."/>
            <person name="Copeland A."/>
            <person name="Lapidus A."/>
            <person name="Glavina del Rio T."/>
            <person name="Dalin E."/>
            <person name="Tice H."/>
            <person name="Bruce D."/>
            <person name="Goodwin L."/>
            <person name="Pitluck S."/>
            <person name="Sims D."/>
            <person name="Brettin T."/>
            <person name="Detter J.C."/>
            <person name="Han C."/>
            <person name="Larimer F."/>
            <person name="Land M."/>
            <person name="Hauser L."/>
            <person name="Kyrpides N."/>
            <person name="Mikhailova N."/>
            <person name="Hazen T.C."/>
            <person name="Richardson P."/>
        </authorList>
    </citation>
    <scope>NUCLEOTIDE SEQUENCE [LARGE SCALE GENOMIC DNA]</scope>
    <source>
        <strain>DSM 19637 / Miyazaki F</strain>
    </source>
</reference>
<evidence type="ECO:0000255" key="1">
    <source>
        <dbReference type="HAMAP-Rule" id="MF_01595"/>
    </source>
</evidence>
<evidence type="ECO:0000256" key="2">
    <source>
        <dbReference type="SAM" id="MobiDB-lite"/>
    </source>
</evidence>
<proteinExistence type="inferred from homology"/>
<keyword id="KW-0963">Cytoplasm</keyword>
<keyword id="KW-0460">Magnesium</keyword>
<keyword id="KW-0479">Metal-binding</keyword>
<keyword id="KW-0548">Nucleotidyltransferase</keyword>
<keyword id="KW-0694">RNA-binding</keyword>
<keyword id="KW-0808">Transferase</keyword>
<dbReference type="EC" id="2.7.7.8" evidence="1"/>
<dbReference type="EMBL" id="CP001197">
    <property type="protein sequence ID" value="ACL09447.1"/>
    <property type="molecule type" value="Genomic_DNA"/>
</dbReference>
<dbReference type="SMR" id="B8DN07"/>
<dbReference type="STRING" id="883.DvMF_2508"/>
<dbReference type="KEGG" id="dvm:DvMF_2508"/>
<dbReference type="eggNOG" id="COG1185">
    <property type="taxonomic scope" value="Bacteria"/>
</dbReference>
<dbReference type="HOGENOM" id="CLU_004217_2_2_7"/>
<dbReference type="OrthoDB" id="9804305at2"/>
<dbReference type="GO" id="GO:0005829">
    <property type="term" value="C:cytosol"/>
    <property type="evidence" value="ECO:0007669"/>
    <property type="project" value="TreeGrafter"/>
</dbReference>
<dbReference type="GO" id="GO:0000175">
    <property type="term" value="F:3'-5'-RNA exonuclease activity"/>
    <property type="evidence" value="ECO:0007669"/>
    <property type="project" value="TreeGrafter"/>
</dbReference>
<dbReference type="GO" id="GO:0000287">
    <property type="term" value="F:magnesium ion binding"/>
    <property type="evidence" value="ECO:0007669"/>
    <property type="project" value="UniProtKB-UniRule"/>
</dbReference>
<dbReference type="GO" id="GO:0004654">
    <property type="term" value="F:polyribonucleotide nucleotidyltransferase activity"/>
    <property type="evidence" value="ECO:0007669"/>
    <property type="project" value="UniProtKB-UniRule"/>
</dbReference>
<dbReference type="GO" id="GO:0003723">
    <property type="term" value="F:RNA binding"/>
    <property type="evidence" value="ECO:0007669"/>
    <property type="project" value="UniProtKB-UniRule"/>
</dbReference>
<dbReference type="GO" id="GO:0006402">
    <property type="term" value="P:mRNA catabolic process"/>
    <property type="evidence" value="ECO:0007669"/>
    <property type="project" value="UniProtKB-UniRule"/>
</dbReference>
<dbReference type="GO" id="GO:0006396">
    <property type="term" value="P:RNA processing"/>
    <property type="evidence" value="ECO:0007669"/>
    <property type="project" value="InterPro"/>
</dbReference>
<dbReference type="CDD" id="cd02393">
    <property type="entry name" value="KH-I_PNPase"/>
    <property type="match status" value="1"/>
</dbReference>
<dbReference type="CDD" id="cd11363">
    <property type="entry name" value="RNase_PH_PNPase_1"/>
    <property type="match status" value="1"/>
</dbReference>
<dbReference type="CDD" id="cd11364">
    <property type="entry name" value="RNase_PH_PNPase_2"/>
    <property type="match status" value="1"/>
</dbReference>
<dbReference type="FunFam" id="3.30.1370.10:FF:000001">
    <property type="entry name" value="Polyribonucleotide nucleotidyltransferase"/>
    <property type="match status" value="1"/>
</dbReference>
<dbReference type="FunFam" id="3.30.230.70:FF:000001">
    <property type="entry name" value="Polyribonucleotide nucleotidyltransferase"/>
    <property type="match status" value="1"/>
</dbReference>
<dbReference type="FunFam" id="3.30.230.70:FF:000002">
    <property type="entry name" value="Polyribonucleotide nucleotidyltransferase"/>
    <property type="match status" value="1"/>
</dbReference>
<dbReference type="Gene3D" id="3.30.230.70">
    <property type="entry name" value="GHMP Kinase, N-terminal domain"/>
    <property type="match status" value="2"/>
</dbReference>
<dbReference type="Gene3D" id="3.30.1370.10">
    <property type="entry name" value="K Homology domain, type 1"/>
    <property type="match status" value="1"/>
</dbReference>
<dbReference type="Gene3D" id="2.40.50.140">
    <property type="entry name" value="Nucleic acid-binding proteins"/>
    <property type="match status" value="1"/>
</dbReference>
<dbReference type="HAMAP" id="MF_01595">
    <property type="entry name" value="PNPase"/>
    <property type="match status" value="1"/>
</dbReference>
<dbReference type="InterPro" id="IPR001247">
    <property type="entry name" value="ExoRNase_PH_dom1"/>
</dbReference>
<dbReference type="InterPro" id="IPR015847">
    <property type="entry name" value="ExoRNase_PH_dom2"/>
</dbReference>
<dbReference type="InterPro" id="IPR036345">
    <property type="entry name" value="ExoRNase_PH_dom2_sf"/>
</dbReference>
<dbReference type="InterPro" id="IPR004087">
    <property type="entry name" value="KH_dom"/>
</dbReference>
<dbReference type="InterPro" id="IPR004088">
    <property type="entry name" value="KH_dom_type_1"/>
</dbReference>
<dbReference type="InterPro" id="IPR036612">
    <property type="entry name" value="KH_dom_type_1_sf"/>
</dbReference>
<dbReference type="InterPro" id="IPR012340">
    <property type="entry name" value="NA-bd_OB-fold"/>
</dbReference>
<dbReference type="InterPro" id="IPR012162">
    <property type="entry name" value="PNPase"/>
</dbReference>
<dbReference type="InterPro" id="IPR027408">
    <property type="entry name" value="PNPase/RNase_PH_dom_sf"/>
</dbReference>
<dbReference type="InterPro" id="IPR015848">
    <property type="entry name" value="PNPase_PH_RNA-bd_bac/org-type"/>
</dbReference>
<dbReference type="InterPro" id="IPR036456">
    <property type="entry name" value="PNPase_PH_RNA-bd_sf"/>
</dbReference>
<dbReference type="InterPro" id="IPR020568">
    <property type="entry name" value="Ribosomal_Su5_D2-typ_SF"/>
</dbReference>
<dbReference type="InterPro" id="IPR003029">
    <property type="entry name" value="S1_domain"/>
</dbReference>
<dbReference type="NCBIfam" id="TIGR03591">
    <property type="entry name" value="polynuc_phos"/>
    <property type="match status" value="1"/>
</dbReference>
<dbReference type="NCBIfam" id="NF008805">
    <property type="entry name" value="PRK11824.1"/>
    <property type="match status" value="1"/>
</dbReference>
<dbReference type="PANTHER" id="PTHR11252">
    <property type="entry name" value="POLYRIBONUCLEOTIDE NUCLEOTIDYLTRANSFERASE"/>
    <property type="match status" value="1"/>
</dbReference>
<dbReference type="PANTHER" id="PTHR11252:SF0">
    <property type="entry name" value="POLYRIBONUCLEOTIDE NUCLEOTIDYLTRANSFERASE 1, MITOCHONDRIAL"/>
    <property type="match status" value="1"/>
</dbReference>
<dbReference type="Pfam" id="PF00013">
    <property type="entry name" value="KH_1"/>
    <property type="match status" value="1"/>
</dbReference>
<dbReference type="Pfam" id="PF03726">
    <property type="entry name" value="PNPase"/>
    <property type="match status" value="1"/>
</dbReference>
<dbReference type="Pfam" id="PF01138">
    <property type="entry name" value="RNase_PH"/>
    <property type="match status" value="2"/>
</dbReference>
<dbReference type="Pfam" id="PF03725">
    <property type="entry name" value="RNase_PH_C"/>
    <property type="match status" value="2"/>
</dbReference>
<dbReference type="Pfam" id="PF00575">
    <property type="entry name" value="S1"/>
    <property type="match status" value="1"/>
</dbReference>
<dbReference type="PIRSF" id="PIRSF005499">
    <property type="entry name" value="PNPase"/>
    <property type="match status" value="1"/>
</dbReference>
<dbReference type="SMART" id="SM00322">
    <property type="entry name" value="KH"/>
    <property type="match status" value="1"/>
</dbReference>
<dbReference type="SMART" id="SM00316">
    <property type="entry name" value="S1"/>
    <property type="match status" value="1"/>
</dbReference>
<dbReference type="SUPFAM" id="SSF54791">
    <property type="entry name" value="Eukaryotic type KH-domain (KH-domain type I)"/>
    <property type="match status" value="1"/>
</dbReference>
<dbReference type="SUPFAM" id="SSF50249">
    <property type="entry name" value="Nucleic acid-binding proteins"/>
    <property type="match status" value="1"/>
</dbReference>
<dbReference type="SUPFAM" id="SSF46915">
    <property type="entry name" value="Polynucleotide phosphorylase/guanosine pentaphosphate synthase (PNPase/GPSI), domain 3"/>
    <property type="match status" value="1"/>
</dbReference>
<dbReference type="SUPFAM" id="SSF55666">
    <property type="entry name" value="Ribonuclease PH domain 2-like"/>
    <property type="match status" value="2"/>
</dbReference>
<dbReference type="SUPFAM" id="SSF54211">
    <property type="entry name" value="Ribosomal protein S5 domain 2-like"/>
    <property type="match status" value="2"/>
</dbReference>
<dbReference type="PROSITE" id="PS50084">
    <property type="entry name" value="KH_TYPE_1"/>
    <property type="match status" value="1"/>
</dbReference>
<dbReference type="PROSITE" id="PS50126">
    <property type="entry name" value="S1"/>
    <property type="match status" value="1"/>
</dbReference>
<gene>
    <name evidence="1" type="primary">pnp</name>
    <name type="ordered locus">DvMF_2508</name>
</gene>
<protein>
    <recommendedName>
        <fullName evidence="1">Polyribonucleotide nucleotidyltransferase</fullName>
        <ecNumber evidence="1">2.7.7.8</ecNumber>
    </recommendedName>
    <alternativeName>
        <fullName evidence="1">Polynucleotide phosphorylase</fullName>
        <shortName evidence="1">PNPase</shortName>
    </alternativeName>
</protein>
<sequence>MQSVFNATRVSAVVGGKEIILETGRLANQAHGAVWVQCGGTVVLVTACTQPLERDMGFFPLTVDYSEKMYAAGRIPGSFFRREIGRPSERETLVSRLIDRPVRPLFTKGFRDEVQILANVISADQENDSDVLAVTGASAALSISPIPFEGPVAGARIGRVNGEFVLNPTMKEMEASDLAIVIAASRDSVVMVEGEAHFVPEDVIVAALEWAHKEIQPLIDAQLKLMELVGKAKMAVTPPVENAELKARVAELATTELDAALRIPEKMARKDARKAVKEKVLEALLADPALAENANLGREVGDMLGSLEKVLVRRRILKEGTRIDGRDTKTVRPILIEAGLLPRAHGSALFSRGETKSLVVATLGSSTDSQRMDSLVGDVTKKFMLHYNFPPYSVGEVKMSRVSRREIGHGALAEKALKPVLPQDDSFPFTLRVVAETMESNGSSSMAAVCGGSLSLMDAGVPVTAPVAGVAMGLIKEEGEYLVLTDILGDEDALGDMDFKIAGTAEGITAVQMDIKITGLPTDVMARAMAQAREARLHILAEMAKVLEAPRTELSKYAPQHAEVFVNPDVIRIIIGPGGKNIKAITAATGASIDIEDSGKVSIFAPTYEAMEMAREMVQYYDQRAELGKNYVGKVRKVLEIGAIVEILPNLEALVHISQLDTNRVEQAGDVARLGEDMTVKVIEINGDRIRASRKAVLLEEQGVEWNPEDTARPSGPPRDRGDRGDRGGRGDRGGDRRGGDRGGRGGDRGRGGDRR</sequence>
<feature type="chain" id="PRO_1000147916" description="Polyribonucleotide nucleotidyltransferase">
    <location>
        <begin position="1"/>
        <end position="756"/>
    </location>
</feature>
<feature type="domain" description="KH" evidence="1">
    <location>
        <begin position="559"/>
        <end position="618"/>
    </location>
</feature>
<feature type="domain" description="S1 motif" evidence="1">
    <location>
        <begin position="628"/>
        <end position="702"/>
    </location>
</feature>
<feature type="region of interest" description="Disordered" evidence="2">
    <location>
        <begin position="703"/>
        <end position="756"/>
    </location>
</feature>
<feature type="compositionally biased region" description="Basic and acidic residues" evidence="2">
    <location>
        <begin position="718"/>
        <end position="756"/>
    </location>
</feature>
<feature type="binding site" evidence="1">
    <location>
        <position position="492"/>
    </location>
    <ligand>
        <name>Mg(2+)</name>
        <dbReference type="ChEBI" id="CHEBI:18420"/>
    </ligand>
</feature>
<feature type="binding site" evidence="1">
    <location>
        <position position="498"/>
    </location>
    <ligand>
        <name>Mg(2+)</name>
        <dbReference type="ChEBI" id="CHEBI:18420"/>
    </ligand>
</feature>
<comment type="function">
    <text evidence="1">Involved in mRNA degradation. Catalyzes the phosphorolysis of single-stranded polyribonucleotides processively in the 3'- to 5'-direction.</text>
</comment>
<comment type="catalytic activity">
    <reaction evidence="1">
        <text>RNA(n+1) + phosphate = RNA(n) + a ribonucleoside 5'-diphosphate</text>
        <dbReference type="Rhea" id="RHEA:22096"/>
        <dbReference type="Rhea" id="RHEA-COMP:14527"/>
        <dbReference type="Rhea" id="RHEA-COMP:17342"/>
        <dbReference type="ChEBI" id="CHEBI:43474"/>
        <dbReference type="ChEBI" id="CHEBI:57930"/>
        <dbReference type="ChEBI" id="CHEBI:140395"/>
        <dbReference type="EC" id="2.7.7.8"/>
    </reaction>
</comment>
<comment type="cofactor">
    <cofactor evidence="1">
        <name>Mg(2+)</name>
        <dbReference type="ChEBI" id="CHEBI:18420"/>
    </cofactor>
</comment>
<comment type="subcellular location">
    <subcellularLocation>
        <location evidence="1">Cytoplasm</location>
    </subcellularLocation>
</comment>
<comment type="similarity">
    <text evidence="1">Belongs to the polyribonucleotide nucleotidyltransferase family.</text>
</comment>
<organism>
    <name type="scientific">Nitratidesulfovibrio vulgaris (strain DSM 19637 / Miyazaki F)</name>
    <name type="common">Desulfovibrio vulgaris</name>
    <dbReference type="NCBI Taxonomy" id="883"/>
    <lineage>
        <taxon>Bacteria</taxon>
        <taxon>Pseudomonadati</taxon>
        <taxon>Thermodesulfobacteriota</taxon>
        <taxon>Desulfovibrionia</taxon>
        <taxon>Desulfovibrionales</taxon>
        <taxon>Desulfovibrionaceae</taxon>
        <taxon>Nitratidesulfovibrio</taxon>
    </lineage>
</organism>
<accession>B8DN07</accession>